<dbReference type="EC" id="2.-.-.-" evidence="5"/>
<dbReference type="EC" id="2.4.2.31" evidence="1 2 3 4"/>
<dbReference type="EMBL" id="X98695">
    <property type="protein sequence ID" value="CAA67254.1"/>
    <property type="molecule type" value="Genomic_DNA"/>
</dbReference>
<dbReference type="EMBL" id="M30001">
    <property type="protein sequence ID" value="AAB07801.1"/>
    <property type="molecule type" value="Genomic_DNA"/>
</dbReference>
<dbReference type="EMBL" id="AF158101">
    <property type="protein sequence ID" value="AAD42602.1"/>
    <property type="molecule type" value="Genomic_DNA"/>
</dbReference>
<dbReference type="PIR" id="T10142">
    <property type="entry name" value="T10142"/>
</dbReference>
<dbReference type="RefSeq" id="NP_049636.1">
    <property type="nucleotide sequence ID" value="NC_000866.4"/>
</dbReference>
<dbReference type="GeneID" id="1258688"/>
<dbReference type="KEGG" id="vg:1258688"/>
<dbReference type="OrthoDB" id="9263at10239"/>
<dbReference type="Proteomes" id="UP000009087">
    <property type="component" value="Segment"/>
</dbReference>
<dbReference type="GO" id="GO:0044423">
    <property type="term" value="C:virion component"/>
    <property type="evidence" value="ECO:0007669"/>
    <property type="project" value="UniProtKB-UniRule"/>
</dbReference>
<dbReference type="GO" id="GO:0106274">
    <property type="term" value="F:NAD+-protein-arginine ADP-ribosyltransferase activity"/>
    <property type="evidence" value="ECO:0000314"/>
    <property type="project" value="UniProtKB"/>
</dbReference>
<dbReference type="HAMAP" id="MF_04142">
    <property type="entry name" value="MODB_T4"/>
    <property type="match status" value="1"/>
</dbReference>
<dbReference type="InterPro" id="IPR043662">
    <property type="entry name" value="ModB-like"/>
</dbReference>
<dbReference type="SUPFAM" id="SSF56399">
    <property type="entry name" value="ADP-ribosylation"/>
    <property type="match status" value="1"/>
</dbReference>
<accession>P39423</accession>
<accession>P39422</accession>
<accession>Q38604</accession>
<sequence length="207" mass="24243">MIINLADVEQLSIKAESVDFQYDMYKKVCEKFTDFEQSVLWQCMEAKKNEALHKHLNEIIKKHLTKSPYQLYRGISKSTKELIKDLQVGEVFSTNRVDSFTTSLHTACSFSYAEYFTETILRLKTDKAFNYSDHISDIILSSPNTEFKYTYEDTDGLDSERTDNLMMIVREQEWMIPIGKYKITSISKEKLHDSFGTFKVYDIEVVE</sequence>
<protein>
    <recommendedName>
        <fullName evidence="1">NAD--protein ADP-ribosyltransferase modB</fullName>
        <ecNumber evidence="5">2.-.-.-</ecNumber>
        <ecNumber evidence="1 2 3 4">2.4.2.31</ecNumber>
    </recommendedName>
</protein>
<proteinExistence type="evidence at protein level"/>
<comment type="function">
    <text evidence="1 2 4 5">ADP-ribosyltransferase that regulates transcription by ADP-ribosylation of host ribosomal protein S1 (PubMed:10634320). Additional identified targets include proteins involved in either translation or cellular metabolism such as elongation factor-Tu or trigger factor (PubMed:16112649). Also reprograms the host's gene-expression system by RNAylating host ribosomal protein S1. ModB can attach NAD-capped RNAs to target proteins post-transcriptionally resulting in covalent RNA-protein conjugates (PubMed:37587340).</text>
</comment>
<comment type="catalytic activity">
    <reaction evidence="1 2 3 4">
        <text>L-arginyl-[protein] + NAD(+) = N(omega)-(ADP-D-ribosyl)-L-arginyl-[protein] + nicotinamide + H(+)</text>
        <dbReference type="Rhea" id="RHEA:19149"/>
        <dbReference type="Rhea" id="RHEA-COMP:10532"/>
        <dbReference type="Rhea" id="RHEA-COMP:15087"/>
        <dbReference type="ChEBI" id="CHEBI:15378"/>
        <dbReference type="ChEBI" id="CHEBI:17154"/>
        <dbReference type="ChEBI" id="CHEBI:29965"/>
        <dbReference type="ChEBI" id="CHEBI:57540"/>
        <dbReference type="ChEBI" id="CHEBI:142554"/>
        <dbReference type="EC" id="2.4.2.31"/>
    </reaction>
</comment>
<comment type="subcellular location">
    <subcellularLocation>
        <location evidence="1">Virion</location>
    </subcellularLocation>
    <text evidence="1">This protein is injected from the virion into the bacterial cell.</text>
</comment>
<comment type="similarity">
    <text evidence="1">Belongs to the Tevenvirinae NAD--protein ADP-ribosyltransferase modA family.</text>
</comment>
<feature type="chain" id="PRO_0000164954" description="NAD--protein ADP-ribosyltransferase modB">
    <location>
        <begin position="1"/>
        <end position="207"/>
    </location>
</feature>
<feature type="active site" evidence="1 3">
    <location>
        <position position="173"/>
    </location>
</feature>
<feature type="binding site" evidence="1 3">
    <location>
        <position position="73"/>
    </location>
    <ligand>
        <name>NAD(+)</name>
        <dbReference type="ChEBI" id="CHEBI:57540"/>
    </ligand>
</feature>
<feature type="mutagenesis site" description="Complete loss of enzymatic activity in vitro." evidence="3">
    <original>L</original>
    <variation>A</variation>
    <location>
        <position position="71"/>
    </location>
</feature>
<feature type="mutagenesis site" description="Complete loss of RNAylation and ADP-ribosylation activity. Delayed lysis." evidence="5">
    <original>RG</original>
    <variation>AA</variation>
    <location>
        <begin position="73"/>
        <end position="74"/>
    </location>
</feature>
<feature type="mutagenesis site" description="Complete loss of enzymatic activity in vitro." evidence="3">
    <original>R</original>
    <variation>A</variation>
    <location>
        <position position="73"/>
    </location>
</feature>
<feature type="mutagenesis site" description="No effect on enzymatic activity in vitro." evidence="3">
    <original>S</original>
    <variation>A</variation>
    <location>
        <position position="111"/>
    </location>
</feature>
<feature type="mutagenesis site" description="Complete loss of enzymatic activity in vitro." evidence="3">
    <original>E</original>
    <variation>A</variation>
    <location>
        <position position="118"/>
    </location>
</feature>
<feature type="mutagenesis site" description="Complete loss of enzymatic activity in vitro." evidence="3">
    <original>F</original>
    <variation>A</variation>
    <location>
        <position position="129"/>
    </location>
</feature>
<feature type="mutagenesis site" description="No effect on enzymatic activity in vitro." evidence="3">
    <original>N</original>
    <variation>A</variation>
    <location>
        <position position="130"/>
    </location>
</feature>
<feature type="mutagenesis site" description="Complete loss of enzymatic activity in vitro." evidence="3">
    <original>Y</original>
    <variation>A</variation>
    <location>
        <position position="131"/>
    </location>
</feature>
<feature type="mutagenesis site" description="Complete loss of enzymatic activity in vitro." evidence="3">
    <original>E</original>
    <variation>A</variation>
    <location>
        <position position="171"/>
    </location>
</feature>
<feature type="mutagenesis site" description="No effect on enzymatic activity in vitro." evidence="3">
    <original>Q</original>
    <variation>A</variation>
    <location>
        <position position="172"/>
    </location>
</feature>
<feature type="mutagenesis site" description="Complete loss of enzymatic activity in vitro." evidence="3">
    <original>E</original>
    <variation>A</variation>
    <location>
        <position position="173"/>
    </location>
</feature>
<feature type="mutagenesis site" description="Complete loss of enzymatic activity in vitro." evidence="3">
    <original>I</original>
    <variation>A</variation>
    <location>
        <position position="176"/>
    </location>
</feature>
<evidence type="ECO:0000255" key="1">
    <source>
        <dbReference type="HAMAP-Rule" id="MF_04142"/>
    </source>
</evidence>
<evidence type="ECO:0000269" key="2">
    <source>
    </source>
</evidence>
<evidence type="ECO:0000269" key="3">
    <source>
    </source>
</evidence>
<evidence type="ECO:0000269" key="4">
    <source>
    </source>
</evidence>
<evidence type="ECO:0000269" key="5">
    <source>
    </source>
</evidence>
<gene>
    <name evidence="1" type="primary">modB</name>
    <name type="synonym">mod</name>
</gene>
<keyword id="KW-0328">Glycosyltransferase</keyword>
<keyword id="KW-1185">Reference proteome</keyword>
<keyword id="KW-0808">Transferase</keyword>
<keyword id="KW-0946">Virion</keyword>
<name>MODB_BPT4</name>
<organism>
    <name type="scientific">Enterobacteria phage T4</name>
    <name type="common">Bacteriophage T4</name>
    <dbReference type="NCBI Taxonomy" id="10665"/>
    <lineage>
        <taxon>Viruses</taxon>
        <taxon>Duplodnaviria</taxon>
        <taxon>Heunggongvirae</taxon>
        <taxon>Uroviricota</taxon>
        <taxon>Caudoviricetes</taxon>
        <taxon>Straboviridae</taxon>
        <taxon>Tevenvirinae</taxon>
        <taxon>Tequatrovirus</taxon>
    </lineage>
</organism>
<reference key="1">
    <citation type="journal article" date="1997" name="Adv. Exp. Med. Biol.">
        <title>ADP-ribosylation and early transcription regulation by bacteriophage T4.</title>
        <authorList>
            <person name="Wilkens K."/>
            <person name="Tiemann B."/>
            <person name="Bazan J.F."/>
            <person name="Rueger W."/>
        </authorList>
    </citation>
    <scope>NUCLEOTIDE SEQUENCE [GENOMIC DNA]</scope>
</reference>
<reference key="2">
    <citation type="journal article" date="1990" name="Gene">
        <title>The bacteriophage T4 gene mrh whose product inhibits late T4 gene expression in an Escherichia coli rpoH (sigma 32) mutant.</title>
        <authorList>
            <person name="Frazier M.W."/>
            <person name="Mosig G."/>
        </authorList>
    </citation>
    <scope>NUCLEOTIDE SEQUENCE [GENOMIC DNA]</scope>
</reference>
<reference key="3">
    <citation type="journal article" date="2003" name="Microbiol. Mol. Biol. Rev.">
        <title>Bacteriophage T4 genome.</title>
        <authorList>
            <person name="Miller E.S."/>
            <person name="Kutter E."/>
            <person name="Mosig G."/>
            <person name="Arisaka F."/>
            <person name="Kunisawa T."/>
            <person name="Ruger W."/>
        </authorList>
    </citation>
    <scope>NUCLEOTIDE SEQUENCE [LARGE SCALE GENOMIC DNA]</scope>
</reference>
<reference key="4">
    <citation type="journal article" date="1999" name="Gene Expr.">
        <title>Overexpression, purification, and partial characterization of ADP-ribosyltransferases modA and modB of bacteriophage T4.</title>
        <authorList>
            <person name="Tiemann B."/>
            <person name="Depping R."/>
            <person name="Rueger W."/>
        </authorList>
    </citation>
    <scope>FUNCTION</scope>
    <scope>CATALYTIC ACTIVITY</scope>
</reference>
<reference key="5">
    <citation type="journal article" date="2004" name="J. Bacteriol.">
        <title>ModA and ModB, two ADP-ribosyltransferases encoded by bacteriophage T4: catalytic properties and mutation analysis.</title>
        <authorList>
            <person name="Tiemann B."/>
            <person name="Depping R."/>
            <person name="Gineikiene E."/>
            <person name="Kaliniene L."/>
            <person name="Nivinskas R."/>
            <person name="Ruger W."/>
        </authorList>
    </citation>
    <scope>CATALYTIC ACTIVITY</scope>
    <scope>MUTAGENESIS OF LEU-71; ARG-73; SER-111; GLU-118; PHE-129; ASN-130; TYR-131; GLU-171; GLN-172; GLU-173 AND ILE-176</scope>
    <scope>ACTIVE SITE</scope>
</reference>
<reference key="6">
    <citation type="journal article" date="2005" name="Biochem. Biophys. Res. Commun.">
        <title>The mono-ADP-ribosyltransferases Alt and ModB of bacteriophage T4: target proteins identified.</title>
        <authorList>
            <person name="Depping R."/>
            <person name="Lohaus C."/>
            <person name="Meyer H.E."/>
            <person name="Ruger W."/>
        </authorList>
    </citation>
    <scope>FUNCTION</scope>
    <scope>CATALYTIC ACTIVITY</scope>
</reference>
<reference key="7">
    <citation type="journal article" date="2023" name="Nature">
        <title>A viral ADP-ribosyltransferase attaches RNA chains to host proteins.</title>
        <authorList>
            <person name="Wolfram-Schauerte M."/>
            <person name="Pozhydaieva N."/>
            <person name="Grawenhoff J."/>
            <person name="Welp L.M."/>
            <person name="Silbern I."/>
            <person name="Wulf A."/>
            <person name="Billau F.A."/>
            <person name="Glatter T."/>
            <person name="Urlaub H."/>
            <person name="Jaeschke A."/>
            <person name="Hoefer K."/>
        </authorList>
    </citation>
    <scope>FUNCTION</scope>
    <scope>MUTAGENESIS OF 73-ARG-GLY-74</scope>
</reference>
<organismHost>
    <name type="scientific">Escherichia coli</name>
    <dbReference type="NCBI Taxonomy" id="562"/>
</organismHost>